<name>MQO_MYCTO</name>
<proteinExistence type="inferred from homology"/>
<organism>
    <name type="scientific">Mycobacterium tuberculosis (strain CDC 1551 / Oshkosh)</name>
    <dbReference type="NCBI Taxonomy" id="83331"/>
    <lineage>
        <taxon>Bacteria</taxon>
        <taxon>Bacillati</taxon>
        <taxon>Actinomycetota</taxon>
        <taxon>Actinomycetes</taxon>
        <taxon>Mycobacteriales</taxon>
        <taxon>Mycobacteriaceae</taxon>
        <taxon>Mycobacterium</taxon>
        <taxon>Mycobacterium tuberculosis complex</taxon>
    </lineage>
</organism>
<protein>
    <recommendedName>
        <fullName>Probable malate:quinone oxidoreductase</fullName>
        <ecNumber>1.1.5.4</ecNumber>
    </recommendedName>
    <alternativeName>
        <fullName>MQO</fullName>
    </alternativeName>
    <alternativeName>
        <fullName>Malate dehydrogenase [quinone]</fullName>
    </alternativeName>
</protein>
<sequence length="493" mass="53595">MSDLARTDVVLIGAGIMSATLGVLLRRLEPNWSITLIERLDAVAAESSGPWNNAGTGHSALCEMNYTPEMPDGSIDITKAVRVNEQFQVTRQFWAYAAENGILTDVRSFLNPVPHVSFVHGSRGVEYLRRRQKALAGNPLFAGTEFIESPDEFARRLPFMAAKRAFSEPVALNWAADGTDVDFGALAKQLIGYCVQNGTTALFGHEVRNLSRQSDGSWTVTMCNRRTGEKRKLNTKFVFVGAGGDTLPVLQKSGIKEVKGFAGFPIGGRFLRAGNPALTASHRAKVYGFPAPGAPPLGALHLDLRFVNGKSWLVFGPYAGWSPKFLKHGQISDLPRSIRPDNLLSVLGVGLTERRLLNYLISQLRLSEPERVSALREFAPSAIDSDWELTIAGQRVQVIRRDERNGGVLEFGTTVIGDADGSIAGLLGGSPGASTAVAIMLDVLQKCFANRYQSWLPTLKEMVPSLGVQLSNEPALFDEVWSWSTKALKLGAA</sequence>
<evidence type="ECO:0000250" key="1"/>
<evidence type="ECO:0000305" key="2"/>
<gene>
    <name type="primary">mqo</name>
    <name type="ordered locus">MT2918</name>
</gene>
<comment type="catalytic activity">
    <reaction>
        <text>(S)-malate + a quinone = a quinol + oxaloacetate</text>
        <dbReference type="Rhea" id="RHEA:46012"/>
        <dbReference type="ChEBI" id="CHEBI:15589"/>
        <dbReference type="ChEBI" id="CHEBI:16452"/>
        <dbReference type="ChEBI" id="CHEBI:24646"/>
        <dbReference type="ChEBI" id="CHEBI:132124"/>
        <dbReference type="EC" id="1.1.5.4"/>
    </reaction>
</comment>
<comment type="cofactor">
    <cofactor evidence="1">
        <name>FAD</name>
        <dbReference type="ChEBI" id="CHEBI:57692"/>
    </cofactor>
</comment>
<comment type="pathway">
    <text>Carbohydrate metabolism; tricarboxylic acid cycle; oxaloacetate from (S)-malate (quinone route): step 1/1.</text>
</comment>
<comment type="similarity">
    <text evidence="2">Belongs to the MQO family.</text>
</comment>
<dbReference type="EC" id="1.1.5.4"/>
<dbReference type="EMBL" id="AE000516">
    <property type="protein sequence ID" value="AAK47244.1"/>
    <property type="molecule type" value="Genomic_DNA"/>
</dbReference>
<dbReference type="PIR" id="G70589">
    <property type="entry name" value="G70589"/>
</dbReference>
<dbReference type="RefSeq" id="WP_003414545.1">
    <property type="nucleotide sequence ID" value="NZ_KK341227.1"/>
</dbReference>
<dbReference type="SMR" id="P9WJP4"/>
<dbReference type="GeneID" id="45426839"/>
<dbReference type="KEGG" id="mtc:MT2918"/>
<dbReference type="PATRIC" id="fig|83331.31.peg.3152"/>
<dbReference type="HOGENOM" id="CLU_028151_0_0_11"/>
<dbReference type="UniPathway" id="UPA00223">
    <property type="reaction ID" value="UER01008"/>
</dbReference>
<dbReference type="Proteomes" id="UP000001020">
    <property type="component" value="Chromosome"/>
</dbReference>
<dbReference type="GO" id="GO:0047545">
    <property type="term" value="F:2-hydroxyglutarate dehydrogenase activity"/>
    <property type="evidence" value="ECO:0007669"/>
    <property type="project" value="TreeGrafter"/>
</dbReference>
<dbReference type="GO" id="GO:0008924">
    <property type="term" value="F:L-malate dehydrogenase (quinone) activity"/>
    <property type="evidence" value="ECO:0007669"/>
    <property type="project" value="UniProtKB-UniRule"/>
</dbReference>
<dbReference type="GO" id="GO:0006099">
    <property type="term" value="P:tricarboxylic acid cycle"/>
    <property type="evidence" value="ECO:0007669"/>
    <property type="project" value="UniProtKB-UniRule"/>
</dbReference>
<dbReference type="Gene3D" id="3.30.9.10">
    <property type="entry name" value="D-Amino Acid Oxidase, subunit A, domain 2"/>
    <property type="match status" value="1"/>
</dbReference>
<dbReference type="Gene3D" id="3.50.50.60">
    <property type="entry name" value="FAD/NAD(P)-binding domain"/>
    <property type="match status" value="1"/>
</dbReference>
<dbReference type="HAMAP" id="MF_00212">
    <property type="entry name" value="MQO"/>
    <property type="match status" value="1"/>
</dbReference>
<dbReference type="InterPro" id="IPR036188">
    <property type="entry name" value="FAD/NAD-bd_sf"/>
</dbReference>
<dbReference type="InterPro" id="IPR006231">
    <property type="entry name" value="MQO"/>
</dbReference>
<dbReference type="NCBIfam" id="TIGR01320">
    <property type="entry name" value="mal_quin_oxido"/>
    <property type="match status" value="1"/>
</dbReference>
<dbReference type="NCBIfam" id="NF003606">
    <property type="entry name" value="PRK05257.2-1"/>
    <property type="match status" value="1"/>
</dbReference>
<dbReference type="NCBIfam" id="NF003611">
    <property type="entry name" value="PRK05257.3-2"/>
    <property type="match status" value="1"/>
</dbReference>
<dbReference type="PANTHER" id="PTHR43104">
    <property type="entry name" value="L-2-HYDROXYGLUTARATE DEHYDROGENASE, MITOCHONDRIAL"/>
    <property type="match status" value="1"/>
</dbReference>
<dbReference type="PANTHER" id="PTHR43104:SF2">
    <property type="entry name" value="L-2-HYDROXYGLUTARATE DEHYDROGENASE, MITOCHONDRIAL"/>
    <property type="match status" value="1"/>
</dbReference>
<dbReference type="Pfam" id="PF06039">
    <property type="entry name" value="Mqo"/>
    <property type="match status" value="1"/>
</dbReference>
<dbReference type="SUPFAM" id="SSF51905">
    <property type="entry name" value="FAD/NAD(P)-binding domain"/>
    <property type="match status" value="1"/>
</dbReference>
<keyword id="KW-0274">FAD</keyword>
<keyword id="KW-0285">Flavoprotein</keyword>
<keyword id="KW-0560">Oxidoreductase</keyword>
<keyword id="KW-1185">Reference proteome</keyword>
<keyword id="KW-0816">Tricarboxylic acid cycle</keyword>
<reference key="1">
    <citation type="journal article" date="2002" name="J. Bacteriol.">
        <title>Whole-genome comparison of Mycobacterium tuberculosis clinical and laboratory strains.</title>
        <authorList>
            <person name="Fleischmann R.D."/>
            <person name="Alland D."/>
            <person name="Eisen J.A."/>
            <person name="Carpenter L."/>
            <person name="White O."/>
            <person name="Peterson J.D."/>
            <person name="DeBoy R.T."/>
            <person name="Dodson R.J."/>
            <person name="Gwinn M.L."/>
            <person name="Haft D.H."/>
            <person name="Hickey E.K."/>
            <person name="Kolonay J.F."/>
            <person name="Nelson W.C."/>
            <person name="Umayam L.A."/>
            <person name="Ermolaeva M.D."/>
            <person name="Salzberg S.L."/>
            <person name="Delcher A."/>
            <person name="Utterback T.R."/>
            <person name="Weidman J.F."/>
            <person name="Khouri H.M."/>
            <person name="Gill J."/>
            <person name="Mikula A."/>
            <person name="Bishai W."/>
            <person name="Jacobs W.R. Jr."/>
            <person name="Venter J.C."/>
            <person name="Fraser C.M."/>
        </authorList>
    </citation>
    <scope>NUCLEOTIDE SEQUENCE [LARGE SCALE GENOMIC DNA]</scope>
    <source>
        <strain>CDC 1551 / Oshkosh</strain>
    </source>
</reference>
<feature type="chain" id="PRO_0000427794" description="Probable malate:quinone oxidoreductase">
    <location>
        <begin position="1"/>
        <end position="493"/>
    </location>
</feature>
<accession>P9WJP4</accession>
<accession>L0TDJ7</accession>
<accession>O05807</accession>
<accession>P65419</accession>